<reference key="1">
    <citation type="journal article" date="2011" name="MBio">
        <title>Novel metabolic attributes of the genus Cyanothece, comprising a group of unicellular nitrogen-fixing Cyanobacteria.</title>
        <authorList>
            <person name="Bandyopadhyay A."/>
            <person name="Elvitigala T."/>
            <person name="Welsh E."/>
            <person name="Stockel J."/>
            <person name="Liberton M."/>
            <person name="Min H."/>
            <person name="Sherman L.A."/>
            <person name="Pakrasi H.B."/>
        </authorList>
    </citation>
    <scope>NUCLEOTIDE SEQUENCE [LARGE SCALE GENOMIC DNA]</scope>
    <source>
        <strain>PCC 7424</strain>
    </source>
</reference>
<gene>
    <name evidence="1" type="primary">glmM</name>
    <name type="ordered locus">PCC7424_4074</name>
</gene>
<feature type="chain" id="PRO_1000201083" description="Phosphoglucosamine mutase">
    <location>
        <begin position="1"/>
        <end position="487"/>
    </location>
</feature>
<feature type="active site" description="Phosphoserine intermediate" evidence="1">
    <location>
        <position position="134"/>
    </location>
</feature>
<feature type="binding site" description="via phosphate group" evidence="1">
    <location>
        <position position="134"/>
    </location>
    <ligand>
        <name>Mg(2+)</name>
        <dbReference type="ChEBI" id="CHEBI:18420"/>
    </ligand>
</feature>
<feature type="binding site" evidence="1">
    <location>
        <position position="277"/>
    </location>
    <ligand>
        <name>Mg(2+)</name>
        <dbReference type="ChEBI" id="CHEBI:18420"/>
    </ligand>
</feature>
<feature type="binding site" evidence="1">
    <location>
        <position position="279"/>
    </location>
    <ligand>
        <name>Mg(2+)</name>
        <dbReference type="ChEBI" id="CHEBI:18420"/>
    </ligand>
</feature>
<feature type="binding site" evidence="1">
    <location>
        <position position="281"/>
    </location>
    <ligand>
        <name>Mg(2+)</name>
        <dbReference type="ChEBI" id="CHEBI:18420"/>
    </ligand>
</feature>
<feature type="modified residue" description="Phosphoserine" evidence="1">
    <location>
        <position position="134"/>
    </location>
</feature>
<proteinExistence type="inferred from homology"/>
<organism>
    <name type="scientific">Gloeothece citriformis (strain PCC 7424)</name>
    <name type="common">Cyanothece sp. (strain PCC 7424)</name>
    <dbReference type="NCBI Taxonomy" id="65393"/>
    <lineage>
        <taxon>Bacteria</taxon>
        <taxon>Bacillati</taxon>
        <taxon>Cyanobacteriota</taxon>
        <taxon>Cyanophyceae</taxon>
        <taxon>Oscillatoriophycideae</taxon>
        <taxon>Chroococcales</taxon>
        <taxon>Aphanothecaceae</taxon>
        <taxon>Gloeothece</taxon>
        <taxon>Gloeothece citriformis</taxon>
    </lineage>
</organism>
<protein>
    <recommendedName>
        <fullName evidence="1">Phosphoglucosamine mutase</fullName>
        <ecNumber evidence="1">5.4.2.10</ecNumber>
    </recommendedName>
</protein>
<dbReference type="EC" id="5.4.2.10" evidence="1"/>
<dbReference type="EMBL" id="CP001291">
    <property type="protein sequence ID" value="ACK72447.1"/>
    <property type="molecule type" value="Genomic_DNA"/>
</dbReference>
<dbReference type="RefSeq" id="WP_015956032.1">
    <property type="nucleotide sequence ID" value="NC_011729.1"/>
</dbReference>
<dbReference type="SMR" id="B7KL75"/>
<dbReference type="STRING" id="65393.PCC7424_4074"/>
<dbReference type="KEGG" id="cyc:PCC7424_4074"/>
<dbReference type="eggNOG" id="COG1109">
    <property type="taxonomic scope" value="Bacteria"/>
</dbReference>
<dbReference type="HOGENOM" id="CLU_016950_7_0_3"/>
<dbReference type="OrthoDB" id="9806956at2"/>
<dbReference type="Proteomes" id="UP000002384">
    <property type="component" value="Chromosome"/>
</dbReference>
<dbReference type="GO" id="GO:0005829">
    <property type="term" value="C:cytosol"/>
    <property type="evidence" value="ECO:0007669"/>
    <property type="project" value="TreeGrafter"/>
</dbReference>
<dbReference type="GO" id="GO:0000287">
    <property type="term" value="F:magnesium ion binding"/>
    <property type="evidence" value="ECO:0007669"/>
    <property type="project" value="UniProtKB-UniRule"/>
</dbReference>
<dbReference type="GO" id="GO:0008966">
    <property type="term" value="F:phosphoglucosamine mutase activity"/>
    <property type="evidence" value="ECO:0007669"/>
    <property type="project" value="UniProtKB-UniRule"/>
</dbReference>
<dbReference type="GO" id="GO:0004615">
    <property type="term" value="F:phosphomannomutase activity"/>
    <property type="evidence" value="ECO:0007669"/>
    <property type="project" value="TreeGrafter"/>
</dbReference>
<dbReference type="GO" id="GO:0005975">
    <property type="term" value="P:carbohydrate metabolic process"/>
    <property type="evidence" value="ECO:0007669"/>
    <property type="project" value="InterPro"/>
</dbReference>
<dbReference type="GO" id="GO:0009252">
    <property type="term" value="P:peptidoglycan biosynthetic process"/>
    <property type="evidence" value="ECO:0007669"/>
    <property type="project" value="TreeGrafter"/>
</dbReference>
<dbReference type="GO" id="GO:0006048">
    <property type="term" value="P:UDP-N-acetylglucosamine biosynthetic process"/>
    <property type="evidence" value="ECO:0007669"/>
    <property type="project" value="TreeGrafter"/>
</dbReference>
<dbReference type="CDD" id="cd05802">
    <property type="entry name" value="GlmM"/>
    <property type="match status" value="1"/>
</dbReference>
<dbReference type="FunFam" id="3.30.310.50:FF:000001">
    <property type="entry name" value="Phosphoglucosamine mutase"/>
    <property type="match status" value="1"/>
</dbReference>
<dbReference type="FunFam" id="3.40.120.10:FF:000001">
    <property type="entry name" value="Phosphoglucosamine mutase"/>
    <property type="match status" value="1"/>
</dbReference>
<dbReference type="FunFam" id="3.40.120.10:FF:000003">
    <property type="entry name" value="Phosphoglucosamine mutase"/>
    <property type="match status" value="1"/>
</dbReference>
<dbReference type="Gene3D" id="3.40.120.10">
    <property type="entry name" value="Alpha-D-Glucose-1,6-Bisphosphate, subunit A, domain 3"/>
    <property type="match status" value="3"/>
</dbReference>
<dbReference type="Gene3D" id="3.30.310.50">
    <property type="entry name" value="Alpha-D-phosphohexomutase, C-terminal domain"/>
    <property type="match status" value="1"/>
</dbReference>
<dbReference type="HAMAP" id="MF_01554_B">
    <property type="entry name" value="GlmM_B"/>
    <property type="match status" value="1"/>
</dbReference>
<dbReference type="InterPro" id="IPR005844">
    <property type="entry name" value="A-D-PHexomutase_a/b/a-I"/>
</dbReference>
<dbReference type="InterPro" id="IPR016055">
    <property type="entry name" value="A-D-PHexomutase_a/b/a-I/II/III"/>
</dbReference>
<dbReference type="InterPro" id="IPR005845">
    <property type="entry name" value="A-D-PHexomutase_a/b/a-II"/>
</dbReference>
<dbReference type="InterPro" id="IPR005846">
    <property type="entry name" value="A-D-PHexomutase_a/b/a-III"/>
</dbReference>
<dbReference type="InterPro" id="IPR005843">
    <property type="entry name" value="A-D-PHexomutase_C"/>
</dbReference>
<dbReference type="InterPro" id="IPR036900">
    <property type="entry name" value="A-D-PHexomutase_C_sf"/>
</dbReference>
<dbReference type="InterPro" id="IPR016066">
    <property type="entry name" value="A-D-PHexomutase_CS"/>
</dbReference>
<dbReference type="InterPro" id="IPR005841">
    <property type="entry name" value="Alpha-D-phosphohexomutase_SF"/>
</dbReference>
<dbReference type="InterPro" id="IPR006352">
    <property type="entry name" value="GlmM_bact"/>
</dbReference>
<dbReference type="InterPro" id="IPR050060">
    <property type="entry name" value="Phosphoglucosamine_mutase"/>
</dbReference>
<dbReference type="NCBIfam" id="TIGR01455">
    <property type="entry name" value="glmM"/>
    <property type="match status" value="1"/>
</dbReference>
<dbReference type="PANTHER" id="PTHR42946:SF1">
    <property type="entry name" value="PHOSPHOGLUCOMUTASE (ALPHA-D-GLUCOSE-1,6-BISPHOSPHATE-DEPENDENT)"/>
    <property type="match status" value="1"/>
</dbReference>
<dbReference type="PANTHER" id="PTHR42946">
    <property type="entry name" value="PHOSPHOHEXOSE MUTASE"/>
    <property type="match status" value="1"/>
</dbReference>
<dbReference type="Pfam" id="PF02878">
    <property type="entry name" value="PGM_PMM_I"/>
    <property type="match status" value="1"/>
</dbReference>
<dbReference type="Pfam" id="PF02879">
    <property type="entry name" value="PGM_PMM_II"/>
    <property type="match status" value="1"/>
</dbReference>
<dbReference type="Pfam" id="PF02880">
    <property type="entry name" value="PGM_PMM_III"/>
    <property type="match status" value="1"/>
</dbReference>
<dbReference type="Pfam" id="PF00408">
    <property type="entry name" value="PGM_PMM_IV"/>
    <property type="match status" value="1"/>
</dbReference>
<dbReference type="PRINTS" id="PR00509">
    <property type="entry name" value="PGMPMM"/>
</dbReference>
<dbReference type="SUPFAM" id="SSF55957">
    <property type="entry name" value="Phosphoglucomutase, C-terminal domain"/>
    <property type="match status" value="1"/>
</dbReference>
<dbReference type="SUPFAM" id="SSF53738">
    <property type="entry name" value="Phosphoglucomutase, first 3 domains"/>
    <property type="match status" value="3"/>
</dbReference>
<dbReference type="PROSITE" id="PS00710">
    <property type="entry name" value="PGM_PMM"/>
    <property type="match status" value="1"/>
</dbReference>
<keyword id="KW-0413">Isomerase</keyword>
<keyword id="KW-0460">Magnesium</keyword>
<keyword id="KW-0479">Metal-binding</keyword>
<keyword id="KW-0597">Phosphoprotein</keyword>
<keyword id="KW-1185">Reference proteome</keyword>
<sequence length="487" mass="52963">MVTSLYRNGNGRLNSYTQDTANLGVVNQLCPLPKTPLFGTDGIRGKVGELLNASLALDLGFCAAQVLKATMPTPGPIIIGQDSRNSSDMLTTAITAGLTSAGVEVWQIGLCPTPCVAYLARNTEAMGGIMISASHNPPEDNGIKFFDHQGLKLSKGLAQQVEDLLRNTLESNSQRESSLSWGKYYHRRELIEQYLQQLSLSIPTDVNLEGMRIVLDLAWGAAVEIAPQVFKSLGAEVICLHDQPDGDRINVNCGSTHLNLLQQAVKEFGADLGVAFDGDADRVLAVDSEGRVVDGDYILYFWGQTLKAQDKLPNNLIIATVMANLGFEKAWQNLGGQLIRTAVGDQHVQAQMWETGAMLGGEQSGHIICHHHGVSGDGIQTALHLAALVRQSGRSLGALVEQSFQPYPQILRNVRVEDRERRCNWKDCNPLQIAIAEAQAAMGDRGRVLVRASGTEPLIRVMVESECAQSANYWTEHLIGVVQKYLA</sequence>
<accession>B7KL75</accession>
<name>GLMM_GLOC7</name>
<comment type="function">
    <text evidence="1">Catalyzes the conversion of glucosamine-6-phosphate to glucosamine-1-phosphate.</text>
</comment>
<comment type="catalytic activity">
    <reaction evidence="1">
        <text>alpha-D-glucosamine 1-phosphate = D-glucosamine 6-phosphate</text>
        <dbReference type="Rhea" id="RHEA:23424"/>
        <dbReference type="ChEBI" id="CHEBI:58516"/>
        <dbReference type="ChEBI" id="CHEBI:58725"/>
        <dbReference type="EC" id="5.4.2.10"/>
    </reaction>
</comment>
<comment type="cofactor">
    <cofactor evidence="1">
        <name>Mg(2+)</name>
        <dbReference type="ChEBI" id="CHEBI:18420"/>
    </cofactor>
    <text evidence="1">Binds 1 Mg(2+) ion per subunit.</text>
</comment>
<comment type="PTM">
    <text evidence="1">Activated by phosphorylation.</text>
</comment>
<comment type="similarity">
    <text evidence="1">Belongs to the phosphohexose mutase family.</text>
</comment>
<evidence type="ECO:0000255" key="1">
    <source>
        <dbReference type="HAMAP-Rule" id="MF_01554"/>
    </source>
</evidence>